<keyword id="KW-1185">Reference proteome</keyword>
<keyword id="KW-0833">Ubl conjugation pathway</keyword>
<reference key="1">
    <citation type="submission" date="2004-04" db="EMBL/GenBank/DDBJ databases">
        <authorList>
            <consortium name="NIH - Xenopus Gene Collection (XGC) project"/>
        </authorList>
    </citation>
    <scope>NUCLEOTIDE SEQUENCE [LARGE SCALE MRNA]</scope>
</reference>
<comment type="function">
    <text evidence="2">Regulatory subunit of the dimeric uba3-nae1 E1 enzyme. E1 activates nedd8 by first adenylating its C-terminal glycine residue with ATP, thereafter linking this residue to the side chain of the catalytic cysteine, yielding a nedd8-uba3 thioester and free AMP. E1 finally transfers nedd8 to the catalytic cysteine of ube2m (By similarity). The covalent attachment of nedd8 to target proteins is known as 'neddylation' and the process is involved in the regulation of cell growth, viability and development.</text>
</comment>
<comment type="pathway">
    <text>Protein modification; protein neddylation.</text>
</comment>
<comment type="subunit">
    <text evidence="1">Heterodimer of uba3 and nae1. The complex binds nedd8 and ube2m (By similarity).</text>
</comment>
<comment type="similarity">
    <text evidence="3">Belongs to the ubiquitin-activating E1 family. ULA1 subfamily.</text>
</comment>
<name>ULA1_XENLA</name>
<organism>
    <name type="scientific">Xenopus laevis</name>
    <name type="common">African clawed frog</name>
    <dbReference type="NCBI Taxonomy" id="8355"/>
    <lineage>
        <taxon>Eukaryota</taxon>
        <taxon>Metazoa</taxon>
        <taxon>Chordata</taxon>
        <taxon>Craniata</taxon>
        <taxon>Vertebrata</taxon>
        <taxon>Euteleostomi</taxon>
        <taxon>Amphibia</taxon>
        <taxon>Batrachia</taxon>
        <taxon>Anura</taxon>
        <taxon>Pipoidea</taxon>
        <taxon>Pipidae</taxon>
        <taxon>Xenopodinae</taxon>
        <taxon>Xenopus</taxon>
        <taxon>Xenopus</taxon>
    </lineage>
</organism>
<dbReference type="EMBL" id="BC068838">
    <property type="protein sequence ID" value="AAH68838.1"/>
    <property type="molecule type" value="mRNA"/>
</dbReference>
<dbReference type="RefSeq" id="NP_001084652.1">
    <property type="nucleotide sequence ID" value="NM_001091183.1"/>
</dbReference>
<dbReference type="SMR" id="Q6NTW6"/>
<dbReference type="DNASU" id="414612"/>
<dbReference type="GeneID" id="414612"/>
<dbReference type="KEGG" id="xla:414612"/>
<dbReference type="AGR" id="Xenbase:XB-GENE-971671"/>
<dbReference type="CTD" id="414612"/>
<dbReference type="Xenbase" id="XB-GENE-971671">
    <property type="gene designation" value="nae1.S"/>
</dbReference>
<dbReference type="OrthoDB" id="1708823at2759"/>
<dbReference type="UniPathway" id="UPA00885"/>
<dbReference type="Proteomes" id="UP000186698">
    <property type="component" value="Chromosome 4S"/>
</dbReference>
<dbReference type="Bgee" id="414612">
    <property type="expression patterns" value="Expressed in muscle tissue and 19 other cell types or tissues"/>
</dbReference>
<dbReference type="GO" id="GO:0005737">
    <property type="term" value="C:cytoplasm"/>
    <property type="evidence" value="ECO:0007669"/>
    <property type="project" value="TreeGrafter"/>
</dbReference>
<dbReference type="GO" id="GO:0019781">
    <property type="term" value="F:NEDD8 activating enzyme activity"/>
    <property type="evidence" value="ECO:0007669"/>
    <property type="project" value="InterPro"/>
</dbReference>
<dbReference type="GO" id="GO:0045116">
    <property type="term" value="P:protein neddylation"/>
    <property type="evidence" value="ECO:0000250"/>
    <property type="project" value="UniProtKB"/>
</dbReference>
<dbReference type="CDD" id="cd01493">
    <property type="entry name" value="APPBP1_RUB"/>
    <property type="match status" value="1"/>
</dbReference>
<dbReference type="FunFam" id="3.40.50.720:FF:000174">
    <property type="entry name" value="NEDD8-activating enzyme E1 regulatory subunit"/>
    <property type="match status" value="1"/>
</dbReference>
<dbReference type="FunFam" id="3.40.50.720:FF:000187">
    <property type="entry name" value="NEDD8-activating enzyme E1 regulatory subunit"/>
    <property type="match status" value="1"/>
</dbReference>
<dbReference type="Gene3D" id="3.40.50.720">
    <property type="entry name" value="NAD(P)-binding Rossmann-like Domain"/>
    <property type="match status" value="2"/>
</dbReference>
<dbReference type="InterPro" id="IPR030667">
    <property type="entry name" value="APP-BP1"/>
</dbReference>
<dbReference type="InterPro" id="IPR045886">
    <property type="entry name" value="ThiF/MoeB/HesA"/>
</dbReference>
<dbReference type="InterPro" id="IPR000594">
    <property type="entry name" value="ThiF_NAD_FAD-bd"/>
</dbReference>
<dbReference type="InterPro" id="IPR035985">
    <property type="entry name" value="Ubiquitin-activating_enz"/>
</dbReference>
<dbReference type="PANTHER" id="PTHR10953:SF29">
    <property type="entry name" value="NEDD8-ACTIVATING ENZYME E1 REGULATORY SUBUNIT"/>
    <property type="match status" value="1"/>
</dbReference>
<dbReference type="PANTHER" id="PTHR10953">
    <property type="entry name" value="UBIQUITIN-ACTIVATING ENZYME E1"/>
    <property type="match status" value="1"/>
</dbReference>
<dbReference type="Pfam" id="PF00899">
    <property type="entry name" value="ThiF"/>
    <property type="match status" value="1"/>
</dbReference>
<dbReference type="PIRSF" id="PIRSF039099">
    <property type="entry name" value="APP-BP1"/>
    <property type="match status" value="1"/>
</dbReference>
<dbReference type="SUPFAM" id="SSF69572">
    <property type="entry name" value="Activating enzymes of the ubiquitin-like proteins"/>
    <property type="match status" value="1"/>
</dbReference>
<sequence length="533" mass="60625">MAQVVHIKEQKYDRQLRLWGDHGQEALESAHVCLINATATGTEILKNLVLPGIGLFTIVDGNVVAGEDVGNNFFLQKESIGKNRAQTSMELLQELNDDVTGNFVPESPEQLLDKDPSFFCKFTMVISTQLPESTLLRLAETLWDSNIPLLVCRAYGFVGYMRIIVKEHTVIESHPDNALEDLRLDQPFPELREHLQSYDLDHMERKDHSHTPWIIVVAKYLDKWRSENGGQMPKSYKEKESFRDLIRQGILKNENGVPEDEENFEEAIKNVNTALNITKVSSSVEEILNDDRCTNLTHQSTSFWILARAVKEFMAMEGKGNLPLRGTIPDMIADSDKFIKLQNIYREKAKKDASAVESCVSKLLQSVGRPPESISERDIRLFCRNCAFLRVVRCRSLEEEYGLDTAKKDDIVSLMENPDNEIVLYLMLRAVDRFQKQLGRYPGIYNYQIESDIGKLKSCLNGLLQEYGLSLTVKDEYIQEFCRYGAAEPHTIASFLGGAAAQEAIKIITKQFVIFNNTFIYNAMLQTSATFQL</sequence>
<evidence type="ECO:0000250" key="1"/>
<evidence type="ECO:0000250" key="2">
    <source>
        <dbReference type="UniProtKB" id="Q13564"/>
    </source>
</evidence>
<evidence type="ECO:0000305" key="3"/>
<feature type="chain" id="PRO_0000194957" description="NEDD8-activating enzyme E1 regulatory subunit">
    <location>
        <begin position="1"/>
        <end position="533"/>
    </location>
</feature>
<feature type="region of interest" description="Interaction with uba3" evidence="1">
    <location>
        <begin position="330"/>
        <end position="343"/>
    </location>
</feature>
<feature type="site" description="Interaction with uba3" evidence="1">
    <location>
        <position position="210"/>
    </location>
</feature>
<protein>
    <recommendedName>
        <fullName>NEDD8-activating enzyme E1 regulatory subunit</fullName>
    </recommendedName>
    <alternativeName>
        <fullName>APP-BP1</fullName>
    </alternativeName>
    <alternativeName>
        <fullName>Amyloid protein-binding protein 1</fullName>
    </alternativeName>
</protein>
<proteinExistence type="evidence at transcript level"/>
<gene>
    <name type="primary">nae1</name>
    <name type="synonym">appbp1</name>
</gene>
<accession>Q6NTW6</accession>